<proteinExistence type="inferred from homology"/>
<dbReference type="EMBL" id="AP006716">
    <property type="protein sequence ID" value="BAE04011.1"/>
    <property type="molecule type" value="Genomic_DNA"/>
</dbReference>
<dbReference type="RefSeq" id="WP_011275027.1">
    <property type="nucleotide sequence ID" value="NC_007168.1"/>
</dbReference>
<dbReference type="SMR" id="Q4L8L4"/>
<dbReference type="KEGG" id="sha:SH0702"/>
<dbReference type="eggNOG" id="COG4640">
    <property type="taxonomic scope" value="Bacteria"/>
</dbReference>
<dbReference type="HOGENOM" id="CLU_047245_0_0_9"/>
<dbReference type="OrthoDB" id="2416352at2"/>
<dbReference type="Proteomes" id="UP000000543">
    <property type="component" value="Chromosome"/>
</dbReference>
<dbReference type="GO" id="GO:0005886">
    <property type="term" value="C:plasma membrane"/>
    <property type="evidence" value="ECO:0007669"/>
    <property type="project" value="UniProtKB-SubCell"/>
</dbReference>
<dbReference type="GO" id="GO:0008270">
    <property type="term" value="F:zinc ion binding"/>
    <property type="evidence" value="ECO:0007669"/>
    <property type="project" value="UniProtKB-KW"/>
</dbReference>
<dbReference type="GO" id="GO:0046677">
    <property type="term" value="P:response to antibiotic"/>
    <property type="evidence" value="ECO:0007669"/>
    <property type="project" value="UniProtKB-KW"/>
</dbReference>
<dbReference type="InterPro" id="IPR023599">
    <property type="entry name" value="Mem_prot_TcaA"/>
</dbReference>
<dbReference type="InterPro" id="IPR054529">
    <property type="entry name" value="TcaA_2nd"/>
</dbReference>
<dbReference type="InterPro" id="IPR054530">
    <property type="entry name" value="TcaA_4th"/>
</dbReference>
<dbReference type="PANTHER" id="PTHR40038">
    <property type="entry name" value="MEMBRANE-ASSOCIATED PROTEIN TCAA"/>
    <property type="match status" value="1"/>
</dbReference>
<dbReference type="PANTHER" id="PTHR40038:SF1">
    <property type="entry name" value="MEMBRANE-ASSOCIATED PROTEIN TCAA"/>
    <property type="match status" value="1"/>
</dbReference>
<dbReference type="Pfam" id="PF22813">
    <property type="entry name" value="TcaA_2nd"/>
    <property type="match status" value="1"/>
</dbReference>
<dbReference type="Pfam" id="PF22820">
    <property type="entry name" value="TcaA_3rd_4th"/>
    <property type="match status" value="1"/>
</dbReference>
<dbReference type="Pfam" id="PF22819">
    <property type="entry name" value="TcaA_5th"/>
    <property type="match status" value="1"/>
</dbReference>
<dbReference type="PIRSF" id="PIRSF032522">
    <property type="entry name" value="TcaA"/>
    <property type="match status" value="1"/>
</dbReference>
<protein>
    <recommendedName>
        <fullName>Membrane-associated protein TcaA</fullName>
    </recommendedName>
</protein>
<gene>
    <name type="primary">tcaA</name>
    <name type="ordered locus">SH0702</name>
</gene>
<accession>Q4L8L4</accession>
<comment type="function">
    <text evidence="1">Plays a major role in decreasing resistance to glycopeptide antibiotics.</text>
</comment>
<comment type="subcellular location">
    <subcellularLocation>
        <location evidence="1">Cell membrane</location>
        <topology evidence="1">Single-pass membrane protein</topology>
    </subcellularLocation>
</comment>
<comment type="similarity">
    <text evidence="3">Belongs to the TcaA family.</text>
</comment>
<name>TCAA_STAHJ</name>
<evidence type="ECO:0000250" key="1"/>
<evidence type="ECO:0000255" key="2"/>
<evidence type="ECO:0000305" key="3"/>
<feature type="chain" id="PRO_0000333175" description="Membrane-associated protein TcaA">
    <location>
        <begin position="1"/>
        <end position="454"/>
    </location>
</feature>
<feature type="topological domain" description="Cytoplasmic" evidence="2">
    <location>
        <begin position="1"/>
        <end position="46"/>
    </location>
</feature>
<feature type="transmembrane region" description="Helical" evidence="2">
    <location>
        <begin position="47"/>
        <end position="67"/>
    </location>
</feature>
<feature type="topological domain" description="Extracellular" evidence="2">
    <location>
        <begin position="68"/>
        <end position="454"/>
    </location>
</feature>
<feature type="zinc finger region" description="C4-type" evidence="2">
    <location>
        <begin position="4"/>
        <end position="21"/>
    </location>
</feature>
<reference key="1">
    <citation type="journal article" date="2005" name="J. Bacteriol.">
        <title>Whole-genome sequencing of Staphylococcus haemolyticus uncovers the extreme plasticity of its genome and the evolution of human-colonizing staphylococcal species.</title>
        <authorList>
            <person name="Takeuchi F."/>
            <person name="Watanabe S."/>
            <person name="Baba T."/>
            <person name="Yuzawa H."/>
            <person name="Ito T."/>
            <person name="Morimoto Y."/>
            <person name="Kuroda M."/>
            <person name="Cui L."/>
            <person name="Takahashi M."/>
            <person name="Ankai A."/>
            <person name="Baba S."/>
            <person name="Fukui S."/>
            <person name="Lee J.C."/>
            <person name="Hiramatsu K."/>
        </authorList>
    </citation>
    <scope>NUCLEOTIDE SEQUENCE [LARGE SCALE GENOMIC DNA]</scope>
    <source>
        <strain>JCSC1435</strain>
    </source>
</reference>
<keyword id="KW-0046">Antibiotic resistance</keyword>
<keyword id="KW-1003">Cell membrane</keyword>
<keyword id="KW-0472">Membrane</keyword>
<keyword id="KW-0479">Metal-binding</keyword>
<keyword id="KW-0812">Transmembrane</keyword>
<keyword id="KW-1133">Transmembrane helix</keyword>
<keyword id="KW-0862">Zinc</keyword>
<keyword id="KW-0863">Zinc-finger</keyword>
<sequence>MSICPKCGQKIDSNLNKCPNCGNKLDNKDNQINSPQINTSNIRIRKFIPWAIVAFIIVLLIIVFVLVRNYNSPDAQTKILVNAIDNNDSQKVATLLSSKNSHIDSDEASVYIDYIRSEVGMKKFARDIKSTVETLNKSDSKEAINLKTRAGNNYLRVSKNGTRLLIFDNMSYTAPTKKAIVKPKLDTKYEFKDGGKKKTVIADANKTTSLGTYIPGIYSVDAKKETEYGEFSGQLKFDFRYGKSNTVEVNENFNEALLTVKLKGKSDLDKDSLKVEINDKQMKYSSSREYGPYPQTKDVTVSALGKAKGKTFHAETKTIKARDLGNINSATLEFDDEEISDYIEEKEAEENSLKTKLSNFFSNYSFTLNSAISRSDFNLVSTFLKDKSSIYKSIKNNLNQSVAFINPQVISASQKGNTINTKVQHLNSNGQYETTNYELREDSDTGNIQLVDSK</sequence>
<organism>
    <name type="scientific">Staphylococcus haemolyticus (strain JCSC1435)</name>
    <dbReference type="NCBI Taxonomy" id="279808"/>
    <lineage>
        <taxon>Bacteria</taxon>
        <taxon>Bacillati</taxon>
        <taxon>Bacillota</taxon>
        <taxon>Bacilli</taxon>
        <taxon>Bacillales</taxon>
        <taxon>Staphylococcaceae</taxon>
        <taxon>Staphylococcus</taxon>
    </lineage>
</organism>